<dbReference type="EMBL" id="CP000243">
    <property type="protein sequence ID" value="ABE06847.1"/>
    <property type="molecule type" value="Genomic_DNA"/>
</dbReference>
<dbReference type="SMR" id="Q1RCR7"/>
<dbReference type="KEGG" id="eci:UTI89_C1365"/>
<dbReference type="HOGENOM" id="CLU_155118_1_0_6"/>
<dbReference type="Proteomes" id="UP000001952">
    <property type="component" value="Chromosome"/>
</dbReference>
<dbReference type="Gene3D" id="3.10.510.20">
    <property type="entry name" value="YcgL domain"/>
    <property type="match status" value="1"/>
</dbReference>
<dbReference type="HAMAP" id="MF_01866">
    <property type="entry name" value="UPF0745"/>
    <property type="match status" value="1"/>
</dbReference>
<dbReference type="InterPro" id="IPR038068">
    <property type="entry name" value="YcgL-like_sf"/>
</dbReference>
<dbReference type="InterPro" id="IPR027354">
    <property type="entry name" value="YcgL_dom"/>
</dbReference>
<dbReference type="PANTHER" id="PTHR38109">
    <property type="entry name" value="PROTEIN YCGL"/>
    <property type="match status" value="1"/>
</dbReference>
<dbReference type="PANTHER" id="PTHR38109:SF1">
    <property type="entry name" value="PROTEIN YCGL"/>
    <property type="match status" value="1"/>
</dbReference>
<dbReference type="Pfam" id="PF05166">
    <property type="entry name" value="YcgL"/>
    <property type="match status" value="1"/>
</dbReference>
<dbReference type="SUPFAM" id="SSF160191">
    <property type="entry name" value="YcgL-like"/>
    <property type="match status" value="1"/>
</dbReference>
<dbReference type="PROSITE" id="PS51648">
    <property type="entry name" value="YCGL"/>
    <property type="match status" value="1"/>
</dbReference>
<feature type="chain" id="PRO_0000375294" description="Protein YcgL">
    <location>
        <begin position="1"/>
        <end position="108"/>
    </location>
</feature>
<feature type="domain" description="YcgL" evidence="1">
    <location>
        <begin position="12"/>
        <end position="96"/>
    </location>
</feature>
<organism>
    <name type="scientific">Escherichia coli (strain UTI89 / UPEC)</name>
    <dbReference type="NCBI Taxonomy" id="364106"/>
    <lineage>
        <taxon>Bacteria</taxon>
        <taxon>Pseudomonadati</taxon>
        <taxon>Pseudomonadota</taxon>
        <taxon>Gammaproteobacteria</taxon>
        <taxon>Enterobacterales</taxon>
        <taxon>Enterobacteriaceae</taxon>
        <taxon>Escherichia</taxon>
    </lineage>
</organism>
<proteinExistence type="inferred from homology"/>
<reference key="1">
    <citation type="journal article" date="2006" name="Proc. Natl. Acad. Sci. U.S.A.">
        <title>Identification of genes subject to positive selection in uropathogenic strains of Escherichia coli: a comparative genomics approach.</title>
        <authorList>
            <person name="Chen S.L."/>
            <person name="Hung C.-S."/>
            <person name="Xu J."/>
            <person name="Reigstad C.S."/>
            <person name="Magrini V."/>
            <person name="Sabo A."/>
            <person name="Blasiar D."/>
            <person name="Bieri T."/>
            <person name="Meyer R.R."/>
            <person name="Ozersky P."/>
            <person name="Armstrong J.R."/>
            <person name="Fulton R.S."/>
            <person name="Latreille J.P."/>
            <person name="Spieth J."/>
            <person name="Hooton T.M."/>
            <person name="Mardis E.R."/>
            <person name="Hultgren S.J."/>
            <person name="Gordon J.I."/>
        </authorList>
    </citation>
    <scope>NUCLEOTIDE SEQUENCE [LARGE SCALE GENOMIC DNA]</scope>
    <source>
        <strain>UTI89 / UPEC</strain>
    </source>
</reference>
<protein>
    <recommendedName>
        <fullName evidence="1">Protein YcgL</fullName>
    </recommendedName>
</protein>
<sequence>MPKPGILKSKSMFCVIYRSSKRDQTYLYVEKKDDFSRVPEELMKGFGQPQLAMILPLDGRKKLVNADIEKVKQALTEQGYYLQLPPPPEDLLKQHLSVMGQKTDDTNK</sequence>
<gene>
    <name evidence="1" type="primary">ycgL</name>
    <name type="ordered locus">UTI89_C1365</name>
</gene>
<evidence type="ECO:0000255" key="1">
    <source>
        <dbReference type="HAMAP-Rule" id="MF_01866"/>
    </source>
</evidence>
<accession>Q1RCR7</accession>
<name>YCGL_ECOUT</name>